<name>RL20_BARHE</name>
<reference key="1">
    <citation type="journal article" date="2004" name="Proc. Natl. Acad. Sci. U.S.A.">
        <title>The louse-borne human pathogen Bartonella quintana is a genomic derivative of the zoonotic agent Bartonella henselae.</title>
        <authorList>
            <person name="Alsmark U.C.M."/>
            <person name="Frank A.C."/>
            <person name="Karlberg E.O."/>
            <person name="Legault B.-A."/>
            <person name="Ardell D.H."/>
            <person name="Canbaeck B."/>
            <person name="Eriksson A.-S."/>
            <person name="Naeslund A.K."/>
            <person name="Handley S.A."/>
            <person name="Huvet M."/>
            <person name="La Scola B."/>
            <person name="Holmberg M."/>
            <person name="Andersson S.G.E."/>
        </authorList>
    </citation>
    <scope>NUCLEOTIDE SEQUENCE [LARGE SCALE GENOMIC DNA]</scope>
    <source>
        <strain>ATCC 49882 / DSM 28221 / CCUG 30454 / Houston 1</strain>
    </source>
</reference>
<proteinExistence type="inferred from homology"/>
<evidence type="ECO:0000255" key="1">
    <source>
        <dbReference type="HAMAP-Rule" id="MF_00382"/>
    </source>
</evidence>
<evidence type="ECO:0000305" key="2"/>
<keyword id="KW-0687">Ribonucleoprotein</keyword>
<keyword id="KW-0689">Ribosomal protein</keyword>
<keyword id="KW-0694">RNA-binding</keyword>
<keyword id="KW-0699">rRNA-binding</keyword>
<comment type="function">
    <text evidence="1">Binds directly to 23S ribosomal RNA and is necessary for the in vitro assembly process of the 50S ribosomal subunit. It is not involved in the protein synthesizing functions of that subunit.</text>
</comment>
<comment type="similarity">
    <text evidence="1">Belongs to the bacterial ribosomal protein bL20 family.</text>
</comment>
<dbReference type="EMBL" id="BX897699">
    <property type="protein sequence ID" value="CAF26899.1"/>
    <property type="molecule type" value="Genomic_DNA"/>
</dbReference>
<dbReference type="RefSeq" id="WP_011180044.1">
    <property type="nucleotide sequence ID" value="NZ_LRIJ02000001.1"/>
</dbReference>
<dbReference type="SMR" id="Q6G5E4"/>
<dbReference type="PaxDb" id="283166-BH00830"/>
<dbReference type="EnsemblBacteria" id="CAF26899">
    <property type="protein sequence ID" value="CAF26899"/>
    <property type="gene ID" value="BH00830"/>
</dbReference>
<dbReference type="GeneID" id="92986369"/>
<dbReference type="KEGG" id="bhe:BH00830"/>
<dbReference type="eggNOG" id="COG0292">
    <property type="taxonomic scope" value="Bacteria"/>
</dbReference>
<dbReference type="OrthoDB" id="9808966at2"/>
<dbReference type="Proteomes" id="UP000000421">
    <property type="component" value="Chromosome"/>
</dbReference>
<dbReference type="GO" id="GO:1990904">
    <property type="term" value="C:ribonucleoprotein complex"/>
    <property type="evidence" value="ECO:0007669"/>
    <property type="project" value="UniProtKB-KW"/>
</dbReference>
<dbReference type="GO" id="GO:0005840">
    <property type="term" value="C:ribosome"/>
    <property type="evidence" value="ECO:0007669"/>
    <property type="project" value="UniProtKB-KW"/>
</dbReference>
<dbReference type="GO" id="GO:0019843">
    <property type="term" value="F:rRNA binding"/>
    <property type="evidence" value="ECO:0007669"/>
    <property type="project" value="UniProtKB-UniRule"/>
</dbReference>
<dbReference type="GO" id="GO:0003735">
    <property type="term" value="F:structural constituent of ribosome"/>
    <property type="evidence" value="ECO:0007669"/>
    <property type="project" value="InterPro"/>
</dbReference>
<dbReference type="GO" id="GO:0000027">
    <property type="term" value="P:ribosomal large subunit assembly"/>
    <property type="evidence" value="ECO:0007669"/>
    <property type="project" value="UniProtKB-UniRule"/>
</dbReference>
<dbReference type="GO" id="GO:0006412">
    <property type="term" value="P:translation"/>
    <property type="evidence" value="ECO:0007669"/>
    <property type="project" value="InterPro"/>
</dbReference>
<dbReference type="CDD" id="cd07026">
    <property type="entry name" value="Ribosomal_L20"/>
    <property type="match status" value="1"/>
</dbReference>
<dbReference type="FunFam" id="1.10.1900.20:FF:000001">
    <property type="entry name" value="50S ribosomal protein L20"/>
    <property type="match status" value="1"/>
</dbReference>
<dbReference type="Gene3D" id="6.10.160.10">
    <property type="match status" value="1"/>
</dbReference>
<dbReference type="Gene3D" id="1.10.1900.20">
    <property type="entry name" value="Ribosomal protein L20"/>
    <property type="match status" value="1"/>
</dbReference>
<dbReference type="HAMAP" id="MF_00382">
    <property type="entry name" value="Ribosomal_bL20"/>
    <property type="match status" value="1"/>
</dbReference>
<dbReference type="InterPro" id="IPR005813">
    <property type="entry name" value="Ribosomal_bL20"/>
</dbReference>
<dbReference type="InterPro" id="IPR049946">
    <property type="entry name" value="RIBOSOMAL_L20_CS"/>
</dbReference>
<dbReference type="InterPro" id="IPR035566">
    <property type="entry name" value="Ribosomal_protein_bL20_C"/>
</dbReference>
<dbReference type="NCBIfam" id="TIGR01032">
    <property type="entry name" value="rplT_bact"/>
    <property type="match status" value="1"/>
</dbReference>
<dbReference type="PANTHER" id="PTHR10986">
    <property type="entry name" value="39S RIBOSOMAL PROTEIN L20"/>
    <property type="match status" value="1"/>
</dbReference>
<dbReference type="Pfam" id="PF00453">
    <property type="entry name" value="Ribosomal_L20"/>
    <property type="match status" value="1"/>
</dbReference>
<dbReference type="PRINTS" id="PR00062">
    <property type="entry name" value="RIBOSOMALL20"/>
</dbReference>
<dbReference type="SUPFAM" id="SSF74731">
    <property type="entry name" value="Ribosomal protein L20"/>
    <property type="match status" value="1"/>
</dbReference>
<dbReference type="PROSITE" id="PS00937">
    <property type="entry name" value="RIBOSOMAL_L20"/>
    <property type="match status" value="1"/>
</dbReference>
<gene>
    <name evidence="1" type="primary">rplT</name>
    <name type="ordered locus">BH00830</name>
</gene>
<organism>
    <name type="scientific">Bartonella henselae (strain ATCC 49882 / DSM 28221 / CCUG 30454 / Houston 1)</name>
    <name type="common">Rochalimaea henselae</name>
    <dbReference type="NCBI Taxonomy" id="283166"/>
    <lineage>
        <taxon>Bacteria</taxon>
        <taxon>Pseudomonadati</taxon>
        <taxon>Pseudomonadota</taxon>
        <taxon>Alphaproteobacteria</taxon>
        <taxon>Hyphomicrobiales</taxon>
        <taxon>Bartonellaceae</taxon>
        <taxon>Bartonella</taxon>
    </lineage>
</organism>
<accession>Q6G5E4</accession>
<feature type="chain" id="PRO_0000243657" description="Large ribosomal subunit protein bL20">
    <location>
        <begin position="1"/>
        <end position="133"/>
    </location>
</feature>
<protein>
    <recommendedName>
        <fullName evidence="1">Large ribosomal subunit protein bL20</fullName>
    </recommendedName>
    <alternativeName>
        <fullName evidence="2">50S ribosomal protein L20</fullName>
    </alternativeName>
</protein>
<sequence>MARVKRGVTAHAKHKKVLKQAEGFYGRRKNTIRAAKAAVDRSKQYAYRDRKNRKRTFRALWIQRINAAVRAEGLTYGRFIDGLSKAGIEIDRKVLSDIAIHESAAFSALVASAKKALEYLKDTTPNAFEGAVK</sequence>